<dbReference type="EMBL" id="M77785">
    <property type="protein sequence ID" value="AAA50511.1"/>
    <property type="molecule type" value="Genomic_DNA"/>
</dbReference>
<dbReference type="EMBL" id="AE007871">
    <property type="protein sequence ID" value="AAK90985.2"/>
    <property type="molecule type" value="Genomic_DNA"/>
</dbReference>
<dbReference type="PIR" id="AI3230">
    <property type="entry name" value="AI3230"/>
</dbReference>
<dbReference type="PIR" id="H42600">
    <property type="entry name" value="H42600"/>
</dbReference>
<dbReference type="RefSeq" id="NP_396544.2">
    <property type="nucleotide sequence ID" value="NC_003065.3"/>
</dbReference>
<dbReference type="RefSeq" id="WP_010891637.1">
    <property type="nucleotide sequence ID" value="NC_003065.3"/>
</dbReference>
<dbReference type="PDB" id="4P0I">
    <property type="method" value="X-ray"/>
    <property type="resolution" value="1.89 A"/>
    <property type="chains" value="A/B=26-283"/>
</dbReference>
<dbReference type="PDB" id="4POW">
    <property type="method" value="X-ray"/>
    <property type="resolution" value="1.55 A"/>
    <property type="chains" value="A/B=26-283"/>
</dbReference>
<dbReference type="PDB" id="4PP0">
    <property type="method" value="X-ray"/>
    <property type="resolution" value="1.57 A"/>
    <property type="chains" value="A/B=26-283"/>
</dbReference>
<dbReference type="PDB" id="5ITO">
    <property type="method" value="X-ray"/>
    <property type="resolution" value="2.35 A"/>
    <property type="chains" value="A/B=26-283"/>
</dbReference>
<dbReference type="PDB" id="5ITP">
    <property type="method" value="X-ray"/>
    <property type="resolution" value="1.85 A"/>
    <property type="chains" value="A/B=26-283"/>
</dbReference>
<dbReference type="PDB" id="5OT8">
    <property type="method" value="X-ray"/>
    <property type="resolution" value="2.35 A"/>
    <property type="chains" value="A/B=26-283"/>
</dbReference>
<dbReference type="PDB" id="5OT9">
    <property type="method" value="X-ray"/>
    <property type="resolution" value="2.45 A"/>
    <property type="chains" value="A/B=26-283"/>
</dbReference>
<dbReference type="PDB" id="5OTA">
    <property type="method" value="X-ray"/>
    <property type="resolution" value="2.10 A"/>
    <property type="chains" value="A/B=26-283"/>
</dbReference>
<dbReference type="PDB" id="5OTC">
    <property type="method" value="X-ray"/>
    <property type="resolution" value="2.20 A"/>
    <property type="chains" value="A/B=26-283"/>
</dbReference>
<dbReference type="PDB" id="5OVZ">
    <property type="method" value="X-ray"/>
    <property type="resolution" value="1.75 A"/>
    <property type="chains" value="A/B=26-283"/>
</dbReference>
<dbReference type="PDBsum" id="4P0I"/>
<dbReference type="PDBsum" id="4POW"/>
<dbReference type="PDBsum" id="4PP0"/>
<dbReference type="PDBsum" id="5ITO"/>
<dbReference type="PDBsum" id="5ITP"/>
<dbReference type="PDBsum" id="5OT8"/>
<dbReference type="PDBsum" id="5OT9"/>
<dbReference type="PDBsum" id="5OTA"/>
<dbReference type="PDBsum" id="5OTC"/>
<dbReference type="PDBsum" id="5OVZ"/>
<dbReference type="SMR" id="P35120"/>
<dbReference type="TCDB" id="3.A.1.3.6">
    <property type="family name" value="the atp-binding cassette (abc) superfamily"/>
</dbReference>
<dbReference type="EnsemblBacteria" id="AAK90985">
    <property type="protein sequence ID" value="AAK90985"/>
    <property type="gene ID" value="Atu6027"/>
</dbReference>
<dbReference type="GeneID" id="1137350"/>
<dbReference type="KEGG" id="atu:Atu6027"/>
<dbReference type="PATRIC" id="fig|176299.10.peg.5234"/>
<dbReference type="HOGENOM" id="CLU_019602_18_0_5"/>
<dbReference type="OrthoDB" id="9807134at2"/>
<dbReference type="PhylomeDB" id="P35120"/>
<dbReference type="BioCyc" id="AGRO:ATU6027-MONOMER"/>
<dbReference type="EvolutionaryTrace" id="P35120"/>
<dbReference type="Proteomes" id="UP000000813">
    <property type="component" value="Plasmid Ti"/>
</dbReference>
<dbReference type="GO" id="GO:0016020">
    <property type="term" value="C:membrane"/>
    <property type="evidence" value="ECO:0007669"/>
    <property type="project" value="InterPro"/>
</dbReference>
<dbReference type="GO" id="GO:0030288">
    <property type="term" value="C:outer membrane-bounded periplasmic space"/>
    <property type="evidence" value="ECO:0007669"/>
    <property type="project" value="InterPro"/>
</dbReference>
<dbReference type="GO" id="GO:0015276">
    <property type="term" value="F:ligand-gated monoatomic ion channel activity"/>
    <property type="evidence" value="ECO:0007669"/>
    <property type="project" value="InterPro"/>
</dbReference>
<dbReference type="Gene3D" id="3.40.190.10">
    <property type="entry name" value="Periplasmic binding protein-like II"/>
    <property type="match status" value="2"/>
</dbReference>
<dbReference type="InterPro" id="IPR001320">
    <property type="entry name" value="Iontro_rcpt_C"/>
</dbReference>
<dbReference type="InterPro" id="IPR005768">
    <property type="entry name" value="Lys_Arg_Orn-bd"/>
</dbReference>
<dbReference type="InterPro" id="IPR018313">
    <property type="entry name" value="SBP_3_CS"/>
</dbReference>
<dbReference type="InterPro" id="IPR001638">
    <property type="entry name" value="Solute-binding_3/MltF_N"/>
</dbReference>
<dbReference type="NCBIfam" id="TIGR01096">
    <property type="entry name" value="3A0103s03R"/>
    <property type="match status" value="1"/>
</dbReference>
<dbReference type="PANTHER" id="PTHR35936:SF17">
    <property type="entry name" value="ARGININE-BINDING EXTRACELLULAR PROTEIN ARTP"/>
    <property type="match status" value="1"/>
</dbReference>
<dbReference type="PANTHER" id="PTHR35936">
    <property type="entry name" value="MEMBRANE-BOUND LYTIC MUREIN TRANSGLYCOSYLASE F"/>
    <property type="match status" value="1"/>
</dbReference>
<dbReference type="Pfam" id="PF00497">
    <property type="entry name" value="SBP_bac_3"/>
    <property type="match status" value="1"/>
</dbReference>
<dbReference type="SMART" id="SM00062">
    <property type="entry name" value="PBPb"/>
    <property type="match status" value="1"/>
</dbReference>
<dbReference type="SMART" id="SM00079">
    <property type="entry name" value="PBPe"/>
    <property type="match status" value="1"/>
</dbReference>
<dbReference type="SUPFAM" id="SSF53850">
    <property type="entry name" value="Periplasmic binding protein-like II"/>
    <property type="match status" value="1"/>
</dbReference>
<dbReference type="PROSITE" id="PS01039">
    <property type="entry name" value="SBP_BACTERIAL_3"/>
    <property type="match status" value="1"/>
</dbReference>
<comment type="function">
    <text>Component of the nopaline active transport system probably consisting of four subunits: Q, M, P and T. This system is also capable of transporting octopine provided that catabolic functions are induced with nopaline.</text>
</comment>
<comment type="subcellular location">
    <subcellularLocation>
        <location evidence="3">Periplasm</location>
    </subcellularLocation>
</comment>
<comment type="similarity">
    <text evidence="3">Belongs to the bacterial solute-binding protein 3 family.</text>
</comment>
<geneLocation type="plasmid">
    <name>pTiC58</name>
</geneLocation>
<protein>
    <recommendedName>
        <fullName>Nopaline-binding periplasmic protein</fullName>
    </recommendedName>
</protein>
<gene>
    <name type="primary">nocT</name>
    <name type="ordered locus">Atu6027</name>
    <name type="ORF">AGR_pTi_67</name>
</gene>
<reference key="1">
    <citation type="journal article" date="1992" name="J. Bacteriol.">
        <title>Opine transport genes in the octopine (occ) and nopaline (noc) catabolic regions in Ti plasmids of Agrobacterium tumefaciens.</title>
        <authorList>
            <person name="Zanker H."/>
            <person name="von Lintig J."/>
            <person name="Schroeder J."/>
        </authorList>
    </citation>
    <scope>NUCLEOTIDE SEQUENCE [GENOMIC DNA]</scope>
</reference>
<reference key="2">
    <citation type="journal article" date="2001" name="Science">
        <title>The genome of the natural genetic engineer Agrobacterium tumefaciens C58.</title>
        <authorList>
            <person name="Wood D.W."/>
            <person name="Setubal J.C."/>
            <person name="Kaul R."/>
            <person name="Monks D.E."/>
            <person name="Kitajima J.P."/>
            <person name="Okura V.K."/>
            <person name="Zhou Y."/>
            <person name="Chen L."/>
            <person name="Wood G.E."/>
            <person name="Almeida N.F. Jr."/>
            <person name="Woo L."/>
            <person name="Chen Y."/>
            <person name="Paulsen I.T."/>
            <person name="Eisen J.A."/>
            <person name="Karp P.D."/>
            <person name="Bovee D. Sr."/>
            <person name="Chapman P."/>
            <person name="Clendenning J."/>
            <person name="Deatherage G."/>
            <person name="Gillet W."/>
            <person name="Grant C."/>
            <person name="Kutyavin T."/>
            <person name="Levy R."/>
            <person name="Li M.-J."/>
            <person name="McClelland E."/>
            <person name="Palmieri A."/>
            <person name="Raymond C."/>
            <person name="Rouse G."/>
            <person name="Saenphimmachak C."/>
            <person name="Wu Z."/>
            <person name="Romero P."/>
            <person name="Gordon D."/>
            <person name="Zhang S."/>
            <person name="Yoo H."/>
            <person name="Tao Y."/>
            <person name="Biddle P."/>
            <person name="Jung M."/>
            <person name="Krespan W."/>
            <person name="Perry M."/>
            <person name="Gordon-Kamm B."/>
            <person name="Liao L."/>
            <person name="Kim S."/>
            <person name="Hendrick C."/>
            <person name="Zhao Z.-Y."/>
            <person name="Dolan M."/>
            <person name="Chumley F."/>
            <person name="Tingey S.V."/>
            <person name="Tomb J.-F."/>
            <person name="Gordon M.P."/>
            <person name="Olson M.V."/>
            <person name="Nester E.W."/>
        </authorList>
    </citation>
    <scope>NUCLEOTIDE SEQUENCE [LARGE SCALE GENOMIC DNA]</scope>
</reference>
<reference key="3">
    <citation type="journal article" date="2001" name="Science">
        <title>Genome sequence of the plant pathogen and biotechnology agent Agrobacterium tumefaciens C58.</title>
        <authorList>
            <person name="Goodner B."/>
            <person name="Hinkle G."/>
            <person name="Gattung S."/>
            <person name="Miller N."/>
            <person name="Blanchard M."/>
            <person name="Qurollo B."/>
            <person name="Goldman B.S."/>
            <person name="Cao Y."/>
            <person name="Askenazi M."/>
            <person name="Halling C."/>
            <person name="Mullin L."/>
            <person name="Houmiel K."/>
            <person name="Gordon J."/>
            <person name="Vaudin M."/>
            <person name="Iartchouk O."/>
            <person name="Epp A."/>
            <person name="Liu F."/>
            <person name="Wollam C."/>
            <person name="Allinger M."/>
            <person name="Doughty D."/>
            <person name="Scott C."/>
            <person name="Lappas C."/>
            <person name="Markelz B."/>
            <person name="Flanagan C."/>
            <person name="Crowell C."/>
            <person name="Gurson J."/>
            <person name="Lomo C."/>
            <person name="Sear C."/>
            <person name="Strub G."/>
            <person name="Cielo C."/>
            <person name="Slater S."/>
        </authorList>
    </citation>
    <scope>NUCLEOTIDE SEQUENCE [LARGE SCALE GENOMIC DNA]</scope>
    <source>
        <strain>C58 / ATCC 33970</strain>
    </source>
</reference>
<keyword id="KW-0002">3D-structure</keyword>
<keyword id="KW-1015">Disulfide bond</keyword>
<keyword id="KW-0574">Periplasm</keyword>
<keyword id="KW-0614">Plasmid</keyword>
<keyword id="KW-1185">Reference proteome</keyword>
<keyword id="KW-0732">Signal</keyword>
<keyword id="KW-0813">Transport</keyword>
<accession>P35120</accession>
<evidence type="ECO:0000250" key="1"/>
<evidence type="ECO:0000255" key="2"/>
<evidence type="ECO:0000305" key="3"/>
<evidence type="ECO:0007829" key="4">
    <source>
        <dbReference type="PDB" id="4POW"/>
    </source>
</evidence>
<evidence type="ECO:0007829" key="5">
    <source>
        <dbReference type="PDB" id="5OT8"/>
    </source>
</evidence>
<evidence type="ECO:0007829" key="6">
    <source>
        <dbReference type="PDB" id="5OT9"/>
    </source>
</evidence>
<name>NOCT_AGRFC</name>
<feature type="signal peptide" evidence="2">
    <location>
        <begin position="1"/>
        <end position="25"/>
    </location>
</feature>
<feature type="chain" id="PRO_0000031767" description="Nopaline-binding periplasmic protein">
    <location>
        <begin position="26"/>
        <end position="283"/>
    </location>
</feature>
<feature type="disulfide bond" evidence="1">
    <location>
        <begin position="63"/>
        <end position="70"/>
    </location>
</feature>
<feature type="sequence conflict" description="In Ref. 1; AAA50511." evidence="3" ref="1">
    <original>D</original>
    <variation>V</variation>
    <location>
        <position position="78"/>
    </location>
</feature>
<feature type="sequence conflict" description="In Ref. 1; AAA50511." evidence="3" ref="1">
    <original>T</original>
    <variation>A</variation>
    <location>
        <position position="143"/>
    </location>
</feature>
<feature type="strand" evidence="4">
    <location>
        <begin position="30"/>
        <end position="35"/>
    </location>
</feature>
<feature type="turn" evidence="4">
    <location>
        <begin position="40"/>
        <end position="42"/>
    </location>
</feature>
<feature type="strand" evidence="4">
    <location>
        <begin position="43"/>
        <end position="45"/>
    </location>
</feature>
<feature type="strand" evidence="4">
    <location>
        <begin position="51"/>
        <end position="53"/>
    </location>
</feature>
<feature type="helix" evidence="4">
    <location>
        <begin position="54"/>
        <end position="66"/>
    </location>
</feature>
<feature type="strand" evidence="4">
    <location>
        <begin position="69"/>
        <end position="74"/>
    </location>
</feature>
<feature type="helix" evidence="4">
    <location>
        <begin position="77"/>
        <end position="79"/>
    </location>
</feature>
<feature type="helix" evidence="4">
    <location>
        <begin position="80"/>
        <end position="85"/>
    </location>
</feature>
<feature type="strand" evidence="4">
    <location>
        <begin position="88"/>
        <end position="92"/>
    </location>
</feature>
<feature type="helix" evidence="4">
    <location>
        <begin position="100"/>
        <end position="103"/>
    </location>
</feature>
<feature type="strand" evidence="5">
    <location>
        <begin position="106"/>
        <end position="108"/>
    </location>
</feature>
<feature type="strand" evidence="4">
    <location>
        <begin position="117"/>
        <end position="122"/>
    </location>
</feature>
<feature type="helix" evidence="4">
    <location>
        <begin position="126"/>
        <end position="129"/>
    </location>
</feature>
<feature type="strand" evidence="4">
    <location>
        <begin position="135"/>
        <end position="138"/>
    </location>
</feature>
<feature type="helix" evidence="4">
    <location>
        <begin position="144"/>
        <end position="157"/>
    </location>
</feature>
<feature type="strand" evidence="6">
    <location>
        <begin position="158"/>
        <end position="160"/>
    </location>
</feature>
<feature type="strand" evidence="4">
    <location>
        <begin position="162"/>
        <end position="165"/>
    </location>
</feature>
<feature type="helix" evidence="4">
    <location>
        <begin position="169"/>
        <end position="177"/>
    </location>
</feature>
<feature type="strand" evidence="4">
    <location>
        <begin position="183"/>
        <end position="188"/>
    </location>
</feature>
<feature type="helix" evidence="4">
    <location>
        <begin position="189"/>
        <end position="197"/>
    </location>
</feature>
<feature type="strand" evidence="4">
    <location>
        <begin position="202"/>
        <end position="207"/>
    </location>
</feature>
<feature type="helix" evidence="4">
    <location>
        <begin position="208"/>
        <end position="216"/>
    </location>
</feature>
<feature type="helix" evidence="4">
    <location>
        <begin position="218"/>
        <end position="220"/>
    </location>
</feature>
<feature type="strand" evidence="4">
    <location>
        <begin position="223"/>
        <end position="232"/>
    </location>
</feature>
<feature type="helix" evidence="4">
    <location>
        <begin position="233"/>
        <end position="235"/>
    </location>
</feature>
<feature type="strand" evidence="4">
    <location>
        <begin position="237"/>
        <end position="239"/>
    </location>
</feature>
<feature type="helix" evidence="4">
    <location>
        <begin position="248"/>
        <end position="263"/>
    </location>
</feature>
<feature type="helix" evidence="4">
    <location>
        <begin position="266"/>
        <end position="275"/>
    </location>
</feature>
<organism>
    <name type="scientific">Agrobacterium fabrum (strain C58 / ATCC 33970)</name>
    <name type="common">Agrobacterium tumefaciens (strain C58)</name>
    <dbReference type="NCBI Taxonomy" id="176299"/>
    <lineage>
        <taxon>Bacteria</taxon>
        <taxon>Pseudomonadati</taxon>
        <taxon>Pseudomonadota</taxon>
        <taxon>Alphaproteobacteria</taxon>
        <taxon>Hyphomicrobiales</taxon>
        <taxon>Rhizobiaceae</taxon>
        <taxon>Rhizobium/Agrobacterium group</taxon>
        <taxon>Agrobacterium</taxon>
        <taxon>Agrobacterium tumefaciens complex</taxon>
    </lineage>
</organism>
<proteinExistence type="evidence at protein level"/>
<sequence length="283" mass="30768">MKFFNLNALAAVVTGVLLAAGPTQAKDYKSITIATEGSYAPYNFKDAGGKLIGFDIDLGNDLCKRMNIECKFVEQAWDGIIPSLTAGRYDAIMAAMGIQPAREKVIAFSRPYLLTPMTFLTTADSPLLKTQVAIENLPLDNITPEQKAELDKFTKIFEGVKFGVQAGTSHEAFMKQMMPSVQISTYDTIDNVVMDLKAGRIDASLASVSFLKPLTDKPDNKDLKMFGPRMTGGLFGKGVGVGIRKEDADLKALFDKAIDAAIADGTVQKLSQQWFGYDASPKQ</sequence>